<keyword id="KW-0067">ATP-binding</keyword>
<keyword id="KW-0436">Ligase</keyword>
<keyword id="KW-0496">Mitochondrion</keyword>
<keyword id="KW-0547">Nucleotide-binding</keyword>
<keyword id="KW-0648">Protein biosynthesis</keyword>
<protein>
    <recommendedName>
        <fullName evidence="1">Glutamyl-tRNA(Gln) amidotransferase subunit B, mitochondrial</fullName>
        <shortName evidence="1">Glu-AdT subunit B</shortName>
        <ecNumber evidence="1">6.3.5.-</ecNumber>
    </recommendedName>
</protein>
<accession>B9W7X4</accession>
<evidence type="ECO:0000255" key="1">
    <source>
        <dbReference type="HAMAP-Rule" id="MF_03147"/>
    </source>
</evidence>
<dbReference type="EC" id="6.3.5.-" evidence="1"/>
<dbReference type="EMBL" id="FM992688">
    <property type="protein sequence ID" value="CAX44787.1"/>
    <property type="molecule type" value="Genomic_DNA"/>
</dbReference>
<dbReference type="RefSeq" id="XP_002417195.1">
    <property type="nucleotide sequence ID" value="XM_002417150.1"/>
</dbReference>
<dbReference type="SMR" id="B9W7X4"/>
<dbReference type="GeneID" id="8044732"/>
<dbReference type="KEGG" id="cdu:CD36_05290"/>
<dbReference type="CGD" id="CAL0000171393">
    <property type="gene designation" value="Cd36_05290"/>
</dbReference>
<dbReference type="VEuPathDB" id="FungiDB:CD36_05290"/>
<dbReference type="eggNOG" id="KOG2438">
    <property type="taxonomic scope" value="Eukaryota"/>
</dbReference>
<dbReference type="HOGENOM" id="CLU_019240_4_0_1"/>
<dbReference type="OrthoDB" id="1722066at2759"/>
<dbReference type="Proteomes" id="UP000002605">
    <property type="component" value="Chromosome 1"/>
</dbReference>
<dbReference type="GO" id="GO:0030956">
    <property type="term" value="C:glutamyl-tRNA(Gln) amidotransferase complex"/>
    <property type="evidence" value="ECO:0007669"/>
    <property type="project" value="UniProtKB-UniRule"/>
</dbReference>
<dbReference type="GO" id="GO:0005739">
    <property type="term" value="C:mitochondrion"/>
    <property type="evidence" value="ECO:0007669"/>
    <property type="project" value="UniProtKB-SubCell"/>
</dbReference>
<dbReference type="GO" id="GO:0005524">
    <property type="term" value="F:ATP binding"/>
    <property type="evidence" value="ECO:0007669"/>
    <property type="project" value="UniProtKB-KW"/>
</dbReference>
<dbReference type="GO" id="GO:0050567">
    <property type="term" value="F:glutaminyl-tRNA synthase (glutamine-hydrolyzing) activity"/>
    <property type="evidence" value="ECO:0007669"/>
    <property type="project" value="UniProtKB-UniRule"/>
</dbReference>
<dbReference type="GO" id="GO:0070681">
    <property type="term" value="P:glutaminyl-tRNAGln biosynthesis via transamidation"/>
    <property type="evidence" value="ECO:0007669"/>
    <property type="project" value="UniProtKB-UniRule"/>
</dbReference>
<dbReference type="GO" id="GO:0032543">
    <property type="term" value="P:mitochondrial translation"/>
    <property type="evidence" value="ECO:0007669"/>
    <property type="project" value="UniProtKB-UniRule"/>
</dbReference>
<dbReference type="Gene3D" id="1.10.10.410">
    <property type="match status" value="1"/>
</dbReference>
<dbReference type="HAMAP" id="MF_00121">
    <property type="entry name" value="GatB"/>
    <property type="match status" value="1"/>
</dbReference>
<dbReference type="InterPro" id="IPR017959">
    <property type="entry name" value="Asn/Gln-tRNA_amidoTrfase_suB/E"/>
</dbReference>
<dbReference type="InterPro" id="IPR006075">
    <property type="entry name" value="Asn/Gln-tRNA_Trfase_suB/E_cat"/>
</dbReference>
<dbReference type="InterPro" id="IPR018027">
    <property type="entry name" value="Asn/Gln_amidotransferase"/>
</dbReference>
<dbReference type="InterPro" id="IPR003789">
    <property type="entry name" value="Asn/Gln_tRNA_amidoTrase-B-like"/>
</dbReference>
<dbReference type="InterPro" id="IPR004413">
    <property type="entry name" value="GatB"/>
</dbReference>
<dbReference type="InterPro" id="IPR023168">
    <property type="entry name" value="GatB_Yqey_C_2"/>
</dbReference>
<dbReference type="InterPro" id="IPR017958">
    <property type="entry name" value="Gln-tRNA_amidoTrfase_suB_CS"/>
</dbReference>
<dbReference type="InterPro" id="IPR014746">
    <property type="entry name" value="Gln_synth/guanido_kin_cat_dom"/>
</dbReference>
<dbReference type="NCBIfam" id="TIGR00133">
    <property type="entry name" value="gatB"/>
    <property type="match status" value="1"/>
</dbReference>
<dbReference type="NCBIfam" id="NF004012">
    <property type="entry name" value="PRK05477.1-2"/>
    <property type="match status" value="1"/>
</dbReference>
<dbReference type="PANTHER" id="PTHR11659">
    <property type="entry name" value="GLUTAMYL-TRNA GLN AMIDOTRANSFERASE SUBUNIT B MITOCHONDRIAL AND PROKARYOTIC PET112-RELATED"/>
    <property type="match status" value="1"/>
</dbReference>
<dbReference type="PANTHER" id="PTHR11659:SF0">
    <property type="entry name" value="GLUTAMYL-TRNA(GLN) AMIDOTRANSFERASE SUBUNIT B, MITOCHONDRIAL"/>
    <property type="match status" value="1"/>
</dbReference>
<dbReference type="Pfam" id="PF02934">
    <property type="entry name" value="GatB_N"/>
    <property type="match status" value="1"/>
</dbReference>
<dbReference type="Pfam" id="PF02637">
    <property type="entry name" value="GatB_Yqey"/>
    <property type="match status" value="1"/>
</dbReference>
<dbReference type="SMART" id="SM00845">
    <property type="entry name" value="GatB_Yqey"/>
    <property type="match status" value="1"/>
</dbReference>
<dbReference type="SUPFAM" id="SSF89095">
    <property type="entry name" value="GatB/YqeY motif"/>
    <property type="match status" value="1"/>
</dbReference>
<dbReference type="SUPFAM" id="SSF55931">
    <property type="entry name" value="Glutamine synthetase/guanido kinase"/>
    <property type="match status" value="1"/>
</dbReference>
<dbReference type="PROSITE" id="PS01234">
    <property type="entry name" value="GATB"/>
    <property type="match status" value="1"/>
</dbReference>
<proteinExistence type="inferred from homology"/>
<name>GATB_CANDC</name>
<feature type="chain" id="PRO_0000413251" description="Glutamyl-tRNA(Gln) amidotransferase subunit B, mitochondrial">
    <location>
        <begin position="1"/>
        <end position="509"/>
    </location>
</feature>
<organism>
    <name type="scientific">Candida dubliniensis (strain CD36 / ATCC MYA-646 / CBS 7987 / NCPF 3949 / NRRL Y-17841)</name>
    <name type="common">Yeast</name>
    <dbReference type="NCBI Taxonomy" id="573826"/>
    <lineage>
        <taxon>Eukaryota</taxon>
        <taxon>Fungi</taxon>
        <taxon>Dikarya</taxon>
        <taxon>Ascomycota</taxon>
        <taxon>Saccharomycotina</taxon>
        <taxon>Pichiomycetes</taxon>
        <taxon>Debaryomycetaceae</taxon>
        <taxon>Candida/Lodderomyces clade</taxon>
        <taxon>Candida</taxon>
    </lineage>
</organism>
<reference key="1">
    <citation type="journal article" date="2009" name="Genome Res.">
        <title>Comparative genomics of the fungal pathogens Candida dubliniensis and Candida albicans.</title>
        <authorList>
            <person name="Jackson A.P."/>
            <person name="Gamble J.A."/>
            <person name="Yeomans T."/>
            <person name="Moran G.P."/>
            <person name="Saunders D."/>
            <person name="Harris D."/>
            <person name="Aslett M."/>
            <person name="Barrell J.F."/>
            <person name="Butler G."/>
            <person name="Citiulo F."/>
            <person name="Coleman D.C."/>
            <person name="de Groot P.W.J."/>
            <person name="Goodwin T.J."/>
            <person name="Quail M.A."/>
            <person name="McQuillan J."/>
            <person name="Munro C.A."/>
            <person name="Pain A."/>
            <person name="Poulter R.T."/>
            <person name="Rajandream M.A."/>
            <person name="Renauld H."/>
            <person name="Spiering M.J."/>
            <person name="Tivey A."/>
            <person name="Gow N.A.R."/>
            <person name="Barrell B."/>
            <person name="Sullivan D.J."/>
            <person name="Berriman M."/>
        </authorList>
    </citation>
    <scope>NUCLEOTIDE SEQUENCE [LARGE SCALE GENOMIC DNA]</scope>
    <source>
        <strain>CD36 / ATCC MYA-646 / CBS 7987 / NCPF 3949 / NRRL Y-17841</strain>
    </source>
</reference>
<comment type="function">
    <text evidence="1">Allows the formation of correctly charged Gln-tRNA(Gln) through the transamidation of misacylated Glu-tRNA(Gln) in the mitochondria. The reaction takes place in the presence of glutamine and ATP through an activated gamma-phospho-Glu-tRNA(Gln).</text>
</comment>
<comment type="catalytic activity">
    <reaction evidence="1">
        <text>L-glutamyl-tRNA(Gln) + L-glutamine + ATP + H2O = L-glutaminyl-tRNA(Gln) + L-glutamate + ADP + phosphate + H(+)</text>
        <dbReference type="Rhea" id="RHEA:17521"/>
        <dbReference type="Rhea" id="RHEA-COMP:9681"/>
        <dbReference type="Rhea" id="RHEA-COMP:9684"/>
        <dbReference type="ChEBI" id="CHEBI:15377"/>
        <dbReference type="ChEBI" id="CHEBI:15378"/>
        <dbReference type="ChEBI" id="CHEBI:29985"/>
        <dbReference type="ChEBI" id="CHEBI:30616"/>
        <dbReference type="ChEBI" id="CHEBI:43474"/>
        <dbReference type="ChEBI" id="CHEBI:58359"/>
        <dbReference type="ChEBI" id="CHEBI:78520"/>
        <dbReference type="ChEBI" id="CHEBI:78521"/>
        <dbReference type="ChEBI" id="CHEBI:456216"/>
    </reaction>
</comment>
<comment type="subunit">
    <text evidence="1">Subunit of the heterotrimeric GatFAB amidotransferase (AdT) complex, composed of A, B and F subunits.</text>
</comment>
<comment type="subcellular location">
    <subcellularLocation>
        <location evidence="1">Mitochondrion</location>
    </subcellularLocation>
</comment>
<comment type="miscellaneous">
    <text evidence="1">This protein may be expected to contain an N-terminal transit peptide but none has been predicted.</text>
</comment>
<comment type="similarity">
    <text evidence="1">Belongs to the GatB/GatE family. GatB subfamily.</text>
</comment>
<sequence>MFLNAEFFFFFFQISISYIRLSQVSMFVRRLHKFSYNPNYKFKCGLEIHTQLKTKYKLFSLSPTSYNEPPNTKLSYFDVGLPGTQPLLNPEALLLALKASVALNCEIQSHSSFDRKHYFYADQPLGYQITQHYYPLAKNGYVQLNKFDDVPDKVITLEQVQLEQDTGKTVNYDDRINVDLNRANTPLIEVVTKPDFENIDQVQAFVRKYQLLVRHLDICTGDLETGAIRVDANISVNDNPRVEIKNLGSSGEIVDALKYEYNRQVTLLQNNETIVQETRGWNGTGTESLRKKENAVDYRYVPDSELPVIRLDSHIQEQLENTLDELPDSVLDRLTKEPYNLQLAHARNLLFQPEVLNYYENIFGRIRDANKWFFHELLAAFAKSDVQFQVDIVSTNMLVDIVSAVEKNEISLTGARIILKHIIRNKSFSTLPHLIKELDIGKPEASAELDDTINEICQQIINTNADVVEKIARGHANALQVLIGQAMKATKGKVHAKEFRSKFMELLNQ</sequence>
<gene>
    <name evidence="1" type="primary">PET112</name>
    <name type="ORF">CD36_05290</name>
</gene>